<feature type="transit peptide" description="Chloroplast and mitochondrion">
    <location>
        <begin position="1"/>
        <end status="unknown"/>
    </location>
</feature>
<feature type="chain" id="PRO_0000031072" description="DNA-directed RNA polymerase 2, chloroplastic/mitochondrial">
    <location>
        <begin status="unknown"/>
        <end position="1020"/>
    </location>
</feature>
<feature type="region of interest" description="Disordered" evidence="5">
    <location>
        <begin position="314"/>
        <end position="336"/>
    </location>
</feature>
<feature type="active site" evidence="1">
    <location>
        <position position="721"/>
    </location>
</feature>
<feature type="active site" evidence="1">
    <location>
        <position position="796"/>
    </location>
</feature>
<feature type="active site" evidence="1">
    <location>
        <position position="953"/>
    </location>
</feature>
<feature type="splice variant" id="VSP_018883" description="In isoform 2." evidence="7">
    <location>
        <begin position="1"/>
        <end position="34"/>
    </location>
</feature>
<feature type="sequence conflict" description="In Ref. 1; BAB78464/BAB78465." evidence="7" ref="1">
    <original>R</original>
    <variation>P</variation>
    <location>
        <position position="403"/>
    </location>
</feature>
<feature type="sequence conflict" description="In Ref. 1; BAB78464/BAB78465." evidence="7" ref="1">
    <original>RT</original>
    <variation>LP</variation>
    <location>
        <begin position="552"/>
        <end position="553"/>
    </location>
</feature>
<feature type="sequence conflict" description="In Ref. 1; BAB78464/BAB78465." evidence="7" ref="1">
    <original>DV</original>
    <variation>EA</variation>
    <location>
        <begin position="753"/>
        <end position="754"/>
    </location>
</feature>
<name>RPOT2_NICSY</name>
<protein>
    <recommendedName>
        <fullName>DNA-directed RNA polymerase 2, chloroplastic/mitochondrial</fullName>
        <ecNumber>2.7.7.6</ecNumber>
    </recommendedName>
    <alternativeName>
        <fullName>NsRpoT-B</fullName>
    </alternativeName>
    <alternativeName>
        <fullName>T7 bacteriophage-type single subunit RNA polymerase 2</fullName>
    </alternativeName>
</protein>
<reference evidence="7" key="1">
    <citation type="journal article" date="2001" name="Biochem. Biophys. Res. Commun.">
        <title>Dual targeting of phage-type RNA polymerase to both mitochondria and plastids is due to alternative translation initiation in single transcripts.</title>
        <authorList>
            <person name="Kobayashi Y."/>
            <person name="Dokiya Y."/>
            <person name="Sugita M."/>
        </authorList>
    </citation>
    <scope>NUCLEOTIDE SEQUENCE [GENOMIC DNA / MRNA]</scope>
    <scope>SUBCELLULAR LOCATION</scope>
    <scope>TISSUE SPECIFICITY</scope>
    <scope>ALTERNATIVE INITIATION</scope>
</reference>
<reference evidence="7" key="2">
    <citation type="journal article" date="2002" name="Plant J.">
        <title>Six active phage-type RNA polymerase genes in Nicotiana tabacum.</title>
        <authorList>
            <person name="Hedtke B."/>
            <person name="Legen J."/>
            <person name="Weihe A."/>
            <person name="Herrmann R.G."/>
            <person name="Boerner T."/>
        </authorList>
    </citation>
    <scope>NUCLEOTIDE SEQUENCE [MRNA]</scope>
    <scope>SUBCELLULAR LOCATION</scope>
</reference>
<dbReference type="EC" id="2.7.7.6"/>
<dbReference type="EMBL" id="AB058957">
    <property type="protein sequence ID" value="BAB78464.1"/>
    <property type="molecule type" value="mRNA"/>
</dbReference>
<dbReference type="EMBL" id="AB058958">
    <property type="protein sequence ID" value="BAB78465.1"/>
    <property type="molecule type" value="Genomic_DNA"/>
</dbReference>
<dbReference type="EMBL" id="AJ302019">
    <property type="protein sequence ID" value="CAC82575.2"/>
    <property type="molecule type" value="mRNA"/>
</dbReference>
<dbReference type="RefSeq" id="NP_001289520.1">
    <molecule id="Q8VWF8-1"/>
    <property type="nucleotide sequence ID" value="NM_001302591.1"/>
</dbReference>
<dbReference type="SMR" id="Q8VWF8"/>
<dbReference type="STRING" id="4096.Q8VWF8"/>
<dbReference type="GeneID" id="104225149"/>
<dbReference type="KEGG" id="nsy:104225149"/>
<dbReference type="eggNOG" id="KOG1038">
    <property type="taxonomic scope" value="Eukaryota"/>
</dbReference>
<dbReference type="Proteomes" id="UP000189701">
    <property type="component" value="Unplaced"/>
</dbReference>
<dbReference type="GO" id="GO:0009507">
    <property type="term" value="C:chloroplast"/>
    <property type="evidence" value="ECO:0007669"/>
    <property type="project" value="UniProtKB-SubCell"/>
</dbReference>
<dbReference type="GO" id="GO:0034245">
    <property type="term" value="C:mitochondrial DNA-directed RNA polymerase complex"/>
    <property type="evidence" value="ECO:0007669"/>
    <property type="project" value="TreeGrafter"/>
</dbReference>
<dbReference type="GO" id="GO:0005739">
    <property type="term" value="C:mitochondrion"/>
    <property type="evidence" value="ECO:0000314"/>
    <property type="project" value="UniProtKB"/>
</dbReference>
<dbReference type="GO" id="GO:0009536">
    <property type="term" value="C:plastid"/>
    <property type="evidence" value="ECO:0000314"/>
    <property type="project" value="UniProtKB"/>
</dbReference>
<dbReference type="GO" id="GO:0003677">
    <property type="term" value="F:DNA binding"/>
    <property type="evidence" value="ECO:0007669"/>
    <property type="project" value="InterPro"/>
</dbReference>
<dbReference type="GO" id="GO:0003899">
    <property type="term" value="F:DNA-directed RNA polymerase activity"/>
    <property type="evidence" value="ECO:0007669"/>
    <property type="project" value="UniProtKB-EC"/>
</dbReference>
<dbReference type="GO" id="GO:0006390">
    <property type="term" value="P:mitochondrial transcription"/>
    <property type="evidence" value="ECO:0007669"/>
    <property type="project" value="TreeGrafter"/>
</dbReference>
<dbReference type="FunFam" id="1.10.1320.10:FF:000001">
    <property type="entry name" value="DNA-directed RNA polymerase"/>
    <property type="match status" value="1"/>
</dbReference>
<dbReference type="FunFam" id="1.10.150.20:FF:000027">
    <property type="entry name" value="DNA-directed RNA polymerase"/>
    <property type="match status" value="1"/>
</dbReference>
<dbReference type="FunFam" id="1.10.287.260:FF:000001">
    <property type="entry name" value="DNA-directed RNA polymerase"/>
    <property type="match status" value="1"/>
</dbReference>
<dbReference type="FunFam" id="1.10.287.280:FF:000001">
    <property type="entry name" value="DNA-directed RNA polymerase"/>
    <property type="match status" value="1"/>
</dbReference>
<dbReference type="Gene3D" id="1.10.287.260">
    <property type="match status" value="1"/>
</dbReference>
<dbReference type="Gene3D" id="1.10.287.280">
    <property type="match status" value="1"/>
</dbReference>
<dbReference type="Gene3D" id="1.10.150.20">
    <property type="entry name" value="5' to 3' exonuclease, C-terminal subdomain"/>
    <property type="match status" value="1"/>
</dbReference>
<dbReference type="Gene3D" id="1.10.1320.10">
    <property type="entry name" value="DNA-directed RNA polymerase, N-terminal domain"/>
    <property type="match status" value="1"/>
</dbReference>
<dbReference type="InterPro" id="IPR024075">
    <property type="entry name" value="DNA-dir_RNA_pol_helix_hairp_sf"/>
</dbReference>
<dbReference type="InterPro" id="IPR046950">
    <property type="entry name" value="DNA-dir_Rpol_C_phage-type"/>
</dbReference>
<dbReference type="InterPro" id="IPR002092">
    <property type="entry name" value="DNA-dir_Rpol_phage-type"/>
</dbReference>
<dbReference type="InterPro" id="IPR043502">
    <property type="entry name" value="DNA/RNA_pol_sf"/>
</dbReference>
<dbReference type="InterPro" id="IPR037159">
    <property type="entry name" value="RNA_POL_N_sf"/>
</dbReference>
<dbReference type="InterPro" id="IPR029262">
    <property type="entry name" value="RPOL_N"/>
</dbReference>
<dbReference type="PANTHER" id="PTHR10102">
    <property type="entry name" value="DNA-DIRECTED RNA POLYMERASE, MITOCHONDRIAL"/>
    <property type="match status" value="1"/>
</dbReference>
<dbReference type="PANTHER" id="PTHR10102:SF0">
    <property type="entry name" value="DNA-DIRECTED RNA POLYMERASE, MITOCHONDRIAL"/>
    <property type="match status" value="1"/>
</dbReference>
<dbReference type="Pfam" id="PF00940">
    <property type="entry name" value="RNA_pol"/>
    <property type="match status" value="1"/>
</dbReference>
<dbReference type="Pfam" id="PF14700">
    <property type="entry name" value="RPOL_N"/>
    <property type="match status" value="1"/>
</dbReference>
<dbReference type="SMART" id="SM01311">
    <property type="entry name" value="RPOL_N"/>
    <property type="match status" value="1"/>
</dbReference>
<dbReference type="SUPFAM" id="SSF56672">
    <property type="entry name" value="DNA/RNA polymerases"/>
    <property type="match status" value="1"/>
</dbReference>
<dbReference type="PROSITE" id="PS00900">
    <property type="entry name" value="RNA_POL_PHAGE_1"/>
    <property type="match status" value="1"/>
</dbReference>
<dbReference type="PROSITE" id="PS00489">
    <property type="entry name" value="RNA_POL_PHAGE_2"/>
    <property type="match status" value="1"/>
</dbReference>
<sequence>MSSTKTPISLTIKLNQFTDKPTGLDINPYHNSPIMWRNIIKQLSSRTPQKLLFSSKNRTYSFLGFGQDSIFKDNTKFRSLIPISCSNIVMGFQNLGEYLPGDEFLSRPLIKNQVNNNFCCRKSYASVAEAVAVSSTDAEEDVSVVDEVHELLTELKKEEKKQFAFRRRKQRMLTSGMGHRKYQTLKRRQVKVETEAWEQAAKEYKELLFDMCEQKLAPNLPYVKSLFLGWFEPLRDKIAEEQELCSQGKSKAAYAKYFYQLPADMMAVITMHKLMGLLMTGGDHGTARVVQAALVIGDAIEQEVRIHNFLEKTKKQKAEKDKQKEDGEHVTQEQEKLRKKVTNLMKKQKLRAVGQIVRRQDDSKPWGQDARAKVGSRLIDLLLQTAYIQPPANQLAVDPPDIRPAFVHSVRTVAKETKSASRRYGIIQCDELVFKGLERTARHMVIPYMPMLVPPVKWTGYDKGGHLYLPSYVMRTHGARQQREAVKRASRNQLQPVFEALDTLGNTKWRINKRVLSVVDRIWAGGGRLADLVDRDDAPLPEEPDTEDEALRTKWRWKVKSVKKENRERHSQRCDIELKLAVARKMKDEESFFYPHNVDFRGRAYPMHPHLNHLGSDICRGVLEFAEGRPLGESGLRWLKIHLANLFAGGVEKLSLEGRIGFTENHMDDIFDSSDKPLEGRRWWLNAEDPFQCLAVCINLSEAVRSSSPETSVSHIPVHQDGSCNGLQHYAALGRDKLGAAAVNLVAGEKPADVYSGIAARVLDIMKRDAQRDPAEFPDAVRARVLVNQVDRKLVKQTVMTSVYGVTYIGARDQIKRRLKERGAIADDSELFGAACYAAKVTLTALGEMFEAARSIMTWLGECAKIIASENEPVRWTTPLGLPVVQPYRKIGRHLIKTSLQILTLQRETEKVMVKRQRTAFPPNFIHSLDGSHMMMTAVACRRAGLNFAGVHDSYWTHACDVDKLNRILREKFVELYEAPILEKLLESFQTSYPTLLFPPLPERGDFDMRDVLESPYFFN</sequence>
<proteinExistence type="evidence at transcript level"/>
<gene>
    <name type="primary">RPOT2</name>
    <name type="synonym">RPOT-B</name>
</gene>
<keyword id="KW-0024">Alternative initiation</keyword>
<keyword id="KW-0150">Chloroplast</keyword>
<keyword id="KW-0240">DNA-directed RNA polymerase</keyword>
<keyword id="KW-0496">Mitochondrion</keyword>
<keyword id="KW-0548">Nucleotidyltransferase</keyword>
<keyword id="KW-0934">Plastid</keyword>
<keyword id="KW-1185">Reference proteome</keyword>
<keyword id="KW-0804">Transcription</keyword>
<keyword id="KW-0808">Transferase</keyword>
<keyword id="KW-0809">Transit peptide</keyword>
<comment type="function">
    <text evidence="2">DNA-dependent RNA polymerase catalyzes the transcription of DNA into RNA using the four ribonucleoside triphosphates as substrates.</text>
</comment>
<comment type="catalytic activity">
    <reaction evidence="3 4">
        <text>RNA(n) + a ribonucleoside 5'-triphosphate = RNA(n+1) + diphosphate</text>
        <dbReference type="Rhea" id="RHEA:21248"/>
        <dbReference type="Rhea" id="RHEA-COMP:14527"/>
        <dbReference type="Rhea" id="RHEA-COMP:17342"/>
        <dbReference type="ChEBI" id="CHEBI:33019"/>
        <dbReference type="ChEBI" id="CHEBI:61557"/>
        <dbReference type="ChEBI" id="CHEBI:140395"/>
        <dbReference type="EC" id="2.7.7.6"/>
    </reaction>
</comment>
<comment type="subcellular location">
    <subcellularLocation>
        <location>Plastid</location>
        <location>Chloroplast</location>
    </subcellularLocation>
    <subcellularLocation>
        <location>Mitochondrion</location>
    </subcellularLocation>
</comment>
<comment type="alternative products">
    <event type="alternative initiation"/>
    <isoform>
        <id>Q8VWF8-1</id>
        <name>1</name>
        <name>Chloroplast/mitochondrial</name>
        <sequence type="displayed"/>
    </isoform>
    <isoform>
        <id>Q8VWF8-2</id>
        <name>2</name>
        <name>Mitochondrial</name>
        <sequence type="described" ref="VSP_018883"/>
    </isoform>
</comment>
<comment type="tissue specificity">
    <text evidence="6">The highest levels of expression are detected in the mature leaves. The level of expression is lowest in the cotyledons.</text>
</comment>
<comment type="similarity">
    <text evidence="7">Belongs to the phage and mitochondrial RNA polymerase family.</text>
</comment>
<organism evidence="8">
    <name type="scientific">Nicotiana sylvestris</name>
    <name type="common">Wood tobacco</name>
    <name type="synonym">South American tobacco</name>
    <dbReference type="NCBI Taxonomy" id="4096"/>
    <lineage>
        <taxon>Eukaryota</taxon>
        <taxon>Viridiplantae</taxon>
        <taxon>Streptophyta</taxon>
        <taxon>Embryophyta</taxon>
        <taxon>Tracheophyta</taxon>
        <taxon>Spermatophyta</taxon>
        <taxon>Magnoliopsida</taxon>
        <taxon>eudicotyledons</taxon>
        <taxon>Gunneridae</taxon>
        <taxon>Pentapetalae</taxon>
        <taxon>asterids</taxon>
        <taxon>lamiids</taxon>
        <taxon>Solanales</taxon>
        <taxon>Solanaceae</taxon>
        <taxon>Nicotianoideae</taxon>
        <taxon>Nicotianeae</taxon>
        <taxon>Nicotiana</taxon>
    </lineage>
</organism>
<accession>Q8VWF8</accession>
<accession>Q8L6K1</accession>
<evidence type="ECO:0000250" key="1"/>
<evidence type="ECO:0000250" key="2">
    <source>
        <dbReference type="UniProtKB" id="P00573"/>
    </source>
</evidence>
<evidence type="ECO:0000255" key="3">
    <source>
        <dbReference type="PROSITE-ProRule" id="PRU10031"/>
    </source>
</evidence>
<evidence type="ECO:0000255" key="4">
    <source>
        <dbReference type="PROSITE-ProRule" id="PRU10032"/>
    </source>
</evidence>
<evidence type="ECO:0000256" key="5">
    <source>
        <dbReference type="SAM" id="MobiDB-lite"/>
    </source>
</evidence>
<evidence type="ECO:0000269" key="6">
    <source>
    </source>
</evidence>
<evidence type="ECO:0000305" key="7"/>
<evidence type="ECO:0000312" key="8">
    <source>
        <dbReference type="EMBL" id="BAB78465.1"/>
    </source>
</evidence>